<name>TRHO_STRPQ</name>
<evidence type="ECO:0000255" key="1">
    <source>
        <dbReference type="HAMAP-Rule" id="MF_00469"/>
    </source>
</evidence>
<evidence type="ECO:0000305" key="2"/>
<dbReference type="EC" id="1.14.-.-" evidence="1"/>
<dbReference type="EMBL" id="BA000034">
    <property type="protein sequence ID" value="BAC64318.1"/>
    <property type="status" value="ALT_INIT"/>
    <property type="molecule type" value="Genomic_DNA"/>
</dbReference>
<dbReference type="RefSeq" id="WP_011054391.1">
    <property type="nucleotide sequence ID" value="NC_004606.1"/>
</dbReference>
<dbReference type="SMR" id="P0DG91"/>
<dbReference type="KEGG" id="sps:SPs1223"/>
<dbReference type="HOGENOM" id="CLU_1776293_0_0_9"/>
<dbReference type="GO" id="GO:0016705">
    <property type="term" value="F:oxidoreductase activity, acting on paired donors, with incorporation or reduction of molecular oxygen"/>
    <property type="evidence" value="ECO:0007669"/>
    <property type="project" value="UniProtKB-UniRule"/>
</dbReference>
<dbReference type="GO" id="GO:0006400">
    <property type="term" value="P:tRNA modification"/>
    <property type="evidence" value="ECO:0007669"/>
    <property type="project" value="UniProtKB-UniRule"/>
</dbReference>
<dbReference type="CDD" id="cd01518">
    <property type="entry name" value="RHOD_YceA"/>
    <property type="match status" value="1"/>
</dbReference>
<dbReference type="Gene3D" id="3.30.70.100">
    <property type="match status" value="1"/>
</dbReference>
<dbReference type="Gene3D" id="3.40.250.10">
    <property type="entry name" value="Rhodanese-like domain"/>
    <property type="match status" value="1"/>
</dbReference>
<dbReference type="HAMAP" id="MF_00469">
    <property type="entry name" value="TrhO"/>
    <property type="match status" value="1"/>
</dbReference>
<dbReference type="InterPro" id="IPR001763">
    <property type="entry name" value="Rhodanese-like_dom"/>
</dbReference>
<dbReference type="InterPro" id="IPR036873">
    <property type="entry name" value="Rhodanese-like_dom_sf"/>
</dbReference>
<dbReference type="InterPro" id="IPR022111">
    <property type="entry name" value="Rhodanese_C"/>
</dbReference>
<dbReference type="InterPro" id="IPR020936">
    <property type="entry name" value="TrhO"/>
</dbReference>
<dbReference type="InterPro" id="IPR040503">
    <property type="entry name" value="TRHO_N"/>
</dbReference>
<dbReference type="NCBIfam" id="NF001135">
    <property type="entry name" value="PRK00142.1-3"/>
    <property type="match status" value="1"/>
</dbReference>
<dbReference type="NCBIfam" id="NF001137">
    <property type="entry name" value="PRK00142.1-5"/>
    <property type="match status" value="1"/>
</dbReference>
<dbReference type="PANTHER" id="PTHR43268:SF3">
    <property type="entry name" value="RHODANESE-LIKE DOMAIN-CONTAINING PROTEIN 7-RELATED"/>
    <property type="match status" value="1"/>
</dbReference>
<dbReference type="PANTHER" id="PTHR43268">
    <property type="entry name" value="THIOSULFATE SULFURTRANSFERASE/RHODANESE-LIKE DOMAIN-CONTAINING PROTEIN 2"/>
    <property type="match status" value="1"/>
</dbReference>
<dbReference type="Pfam" id="PF00581">
    <property type="entry name" value="Rhodanese"/>
    <property type="match status" value="1"/>
</dbReference>
<dbReference type="Pfam" id="PF12368">
    <property type="entry name" value="Rhodanese_C"/>
    <property type="match status" value="1"/>
</dbReference>
<dbReference type="Pfam" id="PF17773">
    <property type="entry name" value="UPF0176_N"/>
    <property type="match status" value="1"/>
</dbReference>
<dbReference type="SMART" id="SM00450">
    <property type="entry name" value="RHOD"/>
    <property type="match status" value="1"/>
</dbReference>
<dbReference type="SUPFAM" id="SSF52821">
    <property type="entry name" value="Rhodanese/Cell cycle control phosphatase"/>
    <property type="match status" value="1"/>
</dbReference>
<dbReference type="PROSITE" id="PS50206">
    <property type="entry name" value="RHODANESE_3"/>
    <property type="match status" value="1"/>
</dbReference>
<organism>
    <name type="scientific">Streptococcus pyogenes serotype M3 (strain SSI-1)</name>
    <dbReference type="NCBI Taxonomy" id="193567"/>
    <lineage>
        <taxon>Bacteria</taxon>
        <taxon>Bacillati</taxon>
        <taxon>Bacillota</taxon>
        <taxon>Bacilli</taxon>
        <taxon>Lactobacillales</taxon>
        <taxon>Streptococcaceae</taxon>
        <taxon>Streptococcus</taxon>
    </lineage>
</organism>
<feature type="chain" id="PRO_0000411635" description="tRNA uridine(34) hydroxylase">
    <location>
        <begin position="1"/>
        <end position="328"/>
    </location>
</feature>
<feature type="domain" description="Rhodanese" evidence="1">
    <location>
        <begin position="130"/>
        <end position="224"/>
    </location>
</feature>
<feature type="active site" description="Cysteine persulfide intermediate" evidence="1">
    <location>
        <position position="184"/>
    </location>
</feature>
<sequence>MSEKIRVLLYYKYVSIENAQEYAAKHLEFCKSIGLKGRILIADEGINGTVSGDYETTQKYMDWVHSDERFADLWFKIDEENQQAFRKMFVRYKKEIVHLGLEDNNFDSDINPLETTGEYLNPKQFKEALLDEDTVVLDTRNDYEYDLGHFRGAIRPDIRNFRELPQWVRDNKDKFMEKRVVVYCTGGVRCEKFSGWMVREGFKDVGQLHGGIATYGKDPEVQGELWDGAMYVFDDRISVPINHVNPTVVSKDYFDGTPCERYVNCANPFCNKQIFASEENETKYVRGCSPECRAHERNRYVQENGLSRQEWAERLEAIGESLPEFVGA</sequence>
<keyword id="KW-0560">Oxidoreductase</keyword>
<keyword id="KW-0819">tRNA processing</keyword>
<accession>P0DG91</accession>
<accession>Q8K7U2</accession>
<gene>
    <name evidence="1" type="primary">trhO</name>
    <name type="ordered locus">SPs1223</name>
</gene>
<reference key="1">
    <citation type="journal article" date="2003" name="Genome Res.">
        <title>Genome sequence of an M3 strain of Streptococcus pyogenes reveals a large-scale genomic rearrangement in invasive strains and new insights into phage evolution.</title>
        <authorList>
            <person name="Nakagawa I."/>
            <person name="Kurokawa K."/>
            <person name="Yamashita A."/>
            <person name="Nakata M."/>
            <person name="Tomiyasu Y."/>
            <person name="Okahashi N."/>
            <person name="Kawabata S."/>
            <person name="Yamazaki K."/>
            <person name="Shiba T."/>
            <person name="Yasunaga T."/>
            <person name="Hayashi H."/>
            <person name="Hattori M."/>
            <person name="Hamada S."/>
        </authorList>
    </citation>
    <scope>NUCLEOTIDE SEQUENCE [LARGE SCALE GENOMIC DNA]</scope>
    <source>
        <strain>SSI-1</strain>
    </source>
</reference>
<comment type="function">
    <text evidence="1">Catalyzes oxygen-dependent 5-hydroxyuridine (ho5U) modification at position 34 in tRNAs.</text>
</comment>
<comment type="catalytic activity">
    <reaction evidence="1">
        <text>uridine(34) in tRNA + AH2 + O2 = 5-hydroxyuridine(34) in tRNA + A + H2O</text>
        <dbReference type="Rhea" id="RHEA:64224"/>
        <dbReference type="Rhea" id="RHEA-COMP:11727"/>
        <dbReference type="Rhea" id="RHEA-COMP:13381"/>
        <dbReference type="ChEBI" id="CHEBI:13193"/>
        <dbReference type="ChEBI" id="CHEBI:15377"/>
        <dbReference type="ChEBI" id="CHEBI:15379"/>
        <dbReference type="ChEBI" id="CHEBI:17499"/>
        <dbReference type="ChEBI" id="CHEBI:65315"/>
        <dbReference type="ChEBI" id="CHEBI:136877"/>
    </reaction>
</comment>
<comment type="similarity">
    <text evidence="1">Belongs to the TrhO family.</text>
</comment>
<comment type="sequence caution" evidence="2">
    <conflict type="erroneous initiation">
        <sequence resource="EMBL-CDS" id="BAC64318"/>
    </conflict>
</comment>
<proteinExistence type="inferred from homology"/>
<protein>
    <recommendedName>
        <fullName evidence="1">tRNA uridine(34) hydroxylase</fullName>
        <ecNumber evidence="1">1.14.-.-</ecNumber>
    </recommendedName>
    <alternativeName>
        <fullName evidence="1">tRNA hydroxylation protein O</fullName>
    </alternativeName>
</protein>